<dbReference type="EC" id="2.7.4.22" evidence="1"/>
<dbReference type="EMBL" id="CP000356">
    <property type="protein sequence ID" value="ABF53670.1"/>
    <property type="molecule type" value="Genomic_DNA"/>
</dbReference>
<dbReference type="RefSeq" id="WP_011542246.1">
    <property type="nucleotide sequence ID" value="NC_008048.1"/>
</dbReference>
<dbReference type="SMR" id="Q1GRQ2"/>
<dbReference type="STRING" id="317655.Sala_1958"/>
<dbReference type="KEGG" id="sal:Sala_1958"/>
<dbReference type="eggNOG" id="COG0528">
    <property type="taxonomic scope" value="Bacteria"/>
</dbReference>
<dbReference type="HOGENOM" id="CLU_033861_0_0_5"/>
<dbReference type="OrthoDB" id="9807458at2"/>
<dbReference type="UniPathway" id="UPA00159">
    <property type="reaction ID" value="UER00275"/>
</dbReference>
<dbReference type="Proteomes" id="UP000006578">
    <property type="component" value="Chromosome"/>
</dbReference>
<dbReference type="GO" id="GO:0005737">
    <property type="term" value="C:cytoplasm"/>
    <property type="evidence" value="ECO:0007669"/>
    <property type="project" value="UniProtKB-SubCell"/>
</dbReference>
<dbReference type="GO" id="GO:0005524">
    <property type="term" value="F:ATP binding"/>
    <property type="evidence" value="ECO:0007669"/>
    <property type="project" value="UniProtKB-KW"/>
</dbReference>
<dbReference type="GO" id="GO:0033862">
    <property type="term" value="F:UMP kinase activity"/>
    <property type="evidence" value="ECO:0007669"/>
    <property type="project" value="UniProtKB-EC"/>
</dbReference>
<dbReference type="GO" id="GO:0044210">
    <property type="term" value="P:'de novo' CTP biosynthetic process"/>
    <property type="evidence" value="ECO:0007669"/>
    <property type="project" value="UniProtKB-UniRule"/>
</dbReference>
<dbReference type="GO" id="GO:0006225">
    <property type="term" value="P:UDP biosynthetic process"/>
    <property type="evidence" value="ECO:0007669"/>
    <property type="project" value="TreeGrafter"/>
</dbReference>
<dbReference type="CDD" id="cd04254">
    <property type="entry name" value="AAK_UMPK-PyrH-Ec"/>
    <property type="match status" value="1"/>
</dbReference>
<dbReference type="FunFam" id="3.40.1160.10:FF:000001">
    <property type="entry name" value="Uridylate kinase"/>
    <property type="match status" value="1"/>
</dbReference>
<dbReference type="Gene3D" id="3.40.1160.10">
    <property type="entry name" value="Acetylglutamate kinase-like"/>
    <property type="match status" value="1"/>
</dbReference>
<dbReference type="HAMAP" id="MF_01220_B">
    <property type="entry name" value="PyrH_B"/>
    <property type="match status" value="1"/>
</dbReference>
<dbReference type="InterPro" id="IPR036393">
    <property type="entry name" value="AceGlu_kinase-like_sf"/>
</dbReference>
<dbReference type="InterPro" id="IPR001048">
    <property type="entry name" value="Asp/Glu/Uridylate_kinase"/>
</dbReference>
<dbReference type="InterPro" id="IPR011817">
    <property type="entry name" value="Uridylate_kinase"/>
</dbReference>
<dbReference type="InterPro" id="IPR015963">
    <property type="entry name" value="Uridylate_kinase_bac"/>
</dbReference>
<dbReference type="NCBIfam" id="TIGR02075">
    <property type="entry name" value="pyrH_bact"/>
    <property type="match status" value="1"/>
</dbReference>
<dbReference type="PANTHER" id="PTHR42833">
    <property type="entry name" value="URIDYLATE KINASE"/>
    <property type="match status" value="1"/>
</dbReference>
<dbReference type="PANTHER" id="PTHR42833:SF4">
    <property type="entry name" value="URIDYLATE KINASE PUMPKIN, CHLOROPLASTIC"/>
    <property type="match status" value="1"/>
</dbReference>
<dbReference type="Pfam" id="PF00696">
    <property type="entry name" value="AA_kinase"/>
    <property type="match status" value="1"/>
</dbReference>
<dbReference type="PIRSF" id="PIRSF005650">
    <property type="entry name" value="Uridylate_kin"/>
    <property type="match status" value="1"/>
</dbReference>
<dbReference type="SUPFAM" id="SSF53633">
    <property type="entry name" value="Carbamate kinase-like"/>
    <property type="match status" value="1"/>
</dbReference>
<accession>Q1GRQ2</accession>
<reference key="1">
    <citation type="journal article" date="2009" name="Proc. Natl. Acad. Sci. U.S.A.">
        <title>The genomic basis of trophic strategy in marine bacteria.</title>
        <authorList>
            <person name="Lauro F.M."/>
            <person name="McDougald D."/>
            <person name="Thomas T."/>
            <person name="Williams T.J."/>
            <person name="Egan S."/>
            <person name="Rice S."/>
            <person name="DeMaere M.Z."/>
            <person name="Ting L."/>
            <person name="Ertan H."/>
            <person name="Johnson J."/>
            <person name="Ferriera S."/>
            <person name="Lapidus A."/>
            <person name="Anderson I."/>
            <person name="Kyrpides N."/>
            <person name="Munk A.C."/>
            <person name="Detter C."/>
            <person name="Han C.S."/>
            <person name="Brown M.V."/>
            <person name="Robb F.T."/>
            <person name="Kjelleberg S."/>
            <person name="Cavicchioli R."/>
        </authorList>
    </citation>
    <scope>NUCLEOTIDE SEQUENCE [LARGE SCALE GENOMIC DNA]</scope>
    <source>
        <strain>DSM 13593 / LMG 18877 / RB2256</strain>
    </source>
</reference>
<comment type="function">
    <text evidence="1">Catalyzes the reversible phosphorylation of UMP to UDP.</text>
</comment>
<comment type="catalytic activity">
    <reaction evidence="1">
        <text>UMP + ATP = UDP + ADP</text>
        <dbReference type="Rhea" id="RHEA:24400"/>
        <dbReference type="ChEBI" id="CHEBI:30616"/>
        <dbReference type="ChEBI" id="CHEBI:57865"/>
        <dbReference type="ChEBI" id="CHEBI:58223"/>
        <dbReference type="ChEBI" id="CHEBI:456216"/>
        <dbReference type="EC" id="2.7.4.22"/>
    </reaction>
</comment>
<comment type="activity regulation">
    <text evidence="1">Inhibited by UTP.</text>
</comment>
<comment type="pathway">
    <text evidence="1">Pyrimidine metabolism; CTP biosynthesis via de novo pathway; UDP from UMP (UMPK route): step 1/1.</text>
</comment>
<comment type="subunit">
    <text evidence="1">Homohexamer.</text>
</comment>
<comment type="subcellular location">
    <subcellularLocation>
        <location evidence="1">Cytoplasm</location>
    </subcellularLocation>
</comment>
<comment type="similarity">
    <text evidence="1">Belongs to the UMP kinase family.</text>
</comment>
<sequence length="241" mass="25566">MALPGLKRILLKLSGEALMGPSPFGIDPETVASMAAEVKEAKDRGLEICLVIGGGNIFRGMAGAAKGMDRAQADYMGMLATVMNALAMQNALEQLGVQTRVQSAIEMDKVCEPVIRRRAERHMEKGRVVIFAAGVGAPYFTTDSGAALRAAEMKCDALLKGTSVDGVYNADPKQDANAVRYDRLSYDRVLADNLKVMDASAVALCRDNHIPIVVFNIREPGNLARVLAGEGVSTVVGDGAV</sequence>
<keyword id="KW-0067">ATP-binding</keyword>
<keyword id="KW-0963">Cytoplasm</keyword>
<keyword id="KW-0418">Kinase</keyword>
<keyword id="KW-0547">Nucleotide-binding</keyword>
<keyword id="KW-0665">Pyrimidine biosynthesis</keyword>
<keyword id="KW-1185">Reference proteome</keyword>
<keyword id="KW-0808">Transferase</keyword>
<protein>
    <recommendedName>
        <fullName evidence="1">Uridylate kinase</fullName>
        <shortName evidence="1">UK</shortName>
        <ecNumber evidence="1">2.7.4.22</ecNumber>
    </recommendedName>
    <alternativeName>
        <fullName evidence="1">Uridine monophosphate kinase</fullName>
        <shortName evidence="1">UMP kinase</shortName>
        <shortName evidence="1">UMPK</shortName>
    </alternativeName>
</protein>
<gene>
    <name evidence="1" type="primary">pyrH</name>
    <name type="ordered locus">Sala_1958</name>
</gene>
<proteinExistence type="inferred from homology"/>
<organism>
    <name type="scientific">Sphingopyxis alaskensis (strain DSM 13593 / LMG 18877 / RB2256)</name>
    <name type="common">Sphingomonas alaskensis</name>
    <dbReference type="NCBI Taxonomy" id="317655"/>
    <lineage>
        <taxon>Bacteria</taxon>
        <taxon>Pseudomonadati</taxon>
        <taxon>Pseudomonadota</taxon>
        <taxon>Alphaproteobacteria</taxon>
        <taxon>Sphingomonadales</taxon>
        <taxon>Sphingomonadaceae</taxon>
        <taxon>Sphingopyxis</taxon>
    </lineage>
</organism>
<feature type="chain" id="PRO_0000323954" description="Uridylate kinase">
    <location>
        <begin position="1"/>
        <end position="241"/>
    </location>
</feature>
<feature type="binding site" evidence="1">
    <location>
        <begin position="12"/>
        <end position="15"/>
    </location>
    <ligand>
        <name>ATP</name>
        <dbReference type="ChEBI" id="CHEBI:30616"/>
    </ligand>
</feature>
<feature type="binding site" evidence="1">
    <location>
        <position position="54"/>
    </location>
    <ligand>
        <name>UMP</name>
        <dbReference type="ChEBI" id="CHEBI:57865"/>
    </ligand>
</feature>
<feature type="binding site" evidence="1">
    <location>
        <position position="55"/>
    </location>
    <ligand>
        <name>ATP</name>
        <dbReference type="ChEBI" id="CHEBI:30616"/>
    </ligand>
</feature>
<feature type="binding site" evidence="1">
    <location>
        <position position="59"/>
    </location>
    <ligand>
        <name>ATP</name>
        <dbReference type="ChEBI" id="CHEBI:30616"/>
    </ligand>
</feature>
<feature type="binding site" evidence="1">
    <location>
        <position position="74"/>
    </location>
    <ligand>
        <name>UMP</name>
        <dbReference type="ChEBI" id="CHEBI:57865"/>
    </ligand>
</feature>
<feature type="binding site" evidence="1">
    <location>
        <begin position="135"/>
        <end position="142"/>
    </location>
    <ligand>
        <name>UMP</name>
        <dbReference type="ChEBI" id="CHEBI:57865"/>
    </ligand>
</feature>
<feature type="binding site" evidence="1">
    <location>
        <position position="162"/>
    </location>
    <ligand>
        <name>ATP</name>
        <dbReference type="ChEBI" id="CHEBI:30616"/>
    </ligand>
</feature>
<feature type="binding site" evidence="1">
    <location>
        <position position="168"/>
    </location>
    <ligand>
        <name>ATP</name>
        <dbReference type="ChEBI" id="CHEBI:30616"/>
    </ligand>
</feature>
<feature type="binding site" evidence="1">
    <location>
        <position position="171"/>
    </location>
    <ligand>
        <name>ATP</name>
        <dbReference type="ChEBI" id="CHEBI:30616"/>
    </ligand>
</feature>
<evidence type="ECO:0000255" key="1">
    <source>
        <dbReference type="HAMAP-Rule" id="MF_01220"/>
    </source>
</evidence>
<name>PYRH_SPHAL</name>